<keyword id="KW-0131">Cell cycle</keyword>
<keyword id="KW-0132">Cell division</keyword>
<keyword id="KW-0342">GTP-binding</keyword>
<keyword id="KW-0460">Magnesium</keyword>
<keyword id="KW-0479">Metal-binding</keyword>
<keyword id="KW-0547">Nucleotide-binding</keyword>
<keyword id="KW-0717">Septation</keyword>
<dbReference type="EMBL" id="CP000436">
    <property type="protein sequence ID" value="ABI24610.1"/>
    <property type="status" value="ALT_INIT"/>
    <property type="molecule type" value="Genomic_DNA"/>
</dbReference>
<dbReference type="SMR" id="Q0I1G1"/>
<dbReference type="KEGG" id="hso:HS_0332"/>
<dbReference type="eggNOG" id="COG0218">
    <property type="taxonomic scope" value="Bacteria"/>
</dbReference>
<dbReference type="HOGENOM" id="CLU_033732_1_2_6"/>
<dbReference type="GO" id="GO:0005829">
    <property type="term" value="C:cytosol"/>
    <property type="evidence" value="ECO:0007669"/>
    <property type="project" value="TreeGrafter"/>
</dbReference>
<dbReference type="GO" id="GO:0005525">
    <property type="term" value="F:GTP binding"/>
    <property type="evidence" value="ECO:0007669"/>
    <property type="project" value="UniProtKB-UniRule"/>
</dbReference>
<dbReference type="GO" id="GO:0046872">
    <property type="term" value="F:metal ion binding"/>
    <property type="evidence" value="ECO:0007669"/>
    <property type="project" value="UniProtKB-KW"/>
</dbReference>
<dbReference type="GO" id="GO:0000917">
    <property type="term" value="P:division septum assembly"/>
    <property type="evidence" value="ECO:0007669"/>
    <property type="project" value="UniProtKB-KW"/>
</dbReference>
<dbReference type="CDD" id="cd01876">
    <property type="entry name" value="YihA_EngB"/>
    <property type="match status" value="1"/>
</dbReference>
<dbReference type="FunFam" id="3.40.50.300:FF:000098">
    <property type="entry name" value="Probable GTP-binding protein EngB"/>
    <property type="match status" value="1"/>
</dbReference>
<dbReference type="Gene3D" id="3.40.50.300">
    <property type="entry name" value="P-loop containing nucleotide triphosphate hydrolases"/>
    <property type="match status" value="1"/>
</dbReference>
<dbReference type="HAMAP" id="MF_00321">
    <property type="entry name" value="GTPase_EngB"/>
    <property type="match status" value="1"/>
</dbReference>
<dbReference type="InterPro" id="IPR030393">
    <property type="entry name" value="G_ENGB_dom"/>
</dbReference>
<dbReference type="InterPro" id="IPR006073">
    <property type="entry name" value="GTP-bd"/>
</dbReference>
<dbReference type="InterPro" id="IPR019987">
    <property type="entry name" value="GTP-bd_ribosome_bio_YsxC"/>
</dbReference>
<dbReference type="InterPro" id="IPR027417">
    <property type="entry name" value="P-loop_NTPase"/>
</dbReference>
<dbReference type="NCBIfam" id="TIGR03598">
    <property type="entry name" value="GTPase_YsxC"/>
    <property type="match status" value="1"/>
</dbReference>
<dbReference type="PANTHER" id="PTHR11649:SF13">
    <property type="entry name" value="ENGB-TYPE G DOMAIN-CONTAINING PROTEIN"/>
    <property type="match status" value="1"/>
</dbReference>
<dbReference type="PANTHER" id="PTHR11649">
    <property type="entry name" value="MSS1/TRME-RELATED GTP-BINDING PROTEIN"/>
    <property type="match status" value="1"/>
</dbReference>
<dbReference type="Pfam" id="PF01926">
    <property type="entry name" value="MMR_HSR1"/>
    <property type="match status" value="1"/>
</dbReference>
<dbReference type="SUPFAM" id="SSF52540">
    <property type="entry name" value="P-loop containing nucleoside triphosphate hydrolases"/>
    <property type="match status" value="1"/>
</dbReference>
<dbReference type="PROSITE" id="PS51706">
    <property type="entry name" value="G_ENGB"/>
    <property type="match status" value="1"/>
</dbReference>
<sequence>MTNIKLNYHKTHFLMSAPNIKVLPEDSGIEIAFAGRSNAGKSTALNALTQQKNLARTSKIPGRTQLINLFQVEPNCKLVDLPGYGYAAVPEQMKLQWQKSLGEYLQKRECLGGLVILMDIRHPLKDLDQQMIEWAVSADLPVLLLLTKADKLSQSARSKQVKMVREAILPFQGDVQVEAFSAQNKIGIERLSEKLDQWFSPLFS</sequence>
<evidence type="ECO:0000255" key="1">
    <source>
        <dbReference type="HAMAP-Rule" id="MF_00321"/>
    </source>
</evidence>
<evidence type="ECO:0000305" key="2"/>
<reference key="1">
    <citation type="journal article" date="2007" name="J. Bacteriol.">
        <title>Complete genome sequence of Haemophilus somnus (Histophilus somni) strain 129Pt and comparison to Haemophilus ducreyi 35000HP and Haemophilus influenzae Rd.</title>
        <authorList>
            <person name="Challacombe J.F."/>
            <person name="Duncan A.J."/>
            <person name="Brettin T.S."/>
            <person name="Bruce D."/>
            <person name="Chertkov O."/>
            <person name="Detter J.C."/>
            <person name="Han C.S."/>
            <person name="Misra M."/>
            <person name="Richardson P."/>
            <person name="Tapia R."/>
            <person name="Thayer N."/>
            <person name="Xie G."/>
            <person name="Inzana T.J."/>
        </authorList>
    </citation>
    <scope>NUCLEOTIDE SEQUENCE [LARGE SCALE GENOMIC DNA]</scope>
    <source>
        <strain>129Pt</strain>
    </source>
</reference>
<proteinExistence type="inferred from homology"/>
<gene>
    <name evidence="1" type="primary">engB</name>
    <name type="ordered locus">HS_0332</name>
</gene>
<name>ENGB_HISS1</name>
<feature type="chain" id="PRO_0000266872" description="Probable GTP-binding protein EngB">
    <location>
        <begin position="1"/>
        <end position="204"/>
    </location>
</feature>
<feature type="domain" description="EngB-type G" evidence="1">
    <location>
        <begin position="27"/>
        <end position="201"/>
    </location>
</feature>
<feature type="binding site" evidence="1">
    <location>
        <begin position="35"/>
        <end position="42"/>
    </location>
    <ligand>
        <name>GTP</name>
        <dbReference type="ChEBI" id="CHEBI:37565"/>
    </ligand>
</feature>
<feature type="binding site" evidence="1">
    <location>
        <position position="42"/>
    </location>
    <ligand>
        <name>Mg(2+)</name>
        <dbReference type="ChEBI" id="CHEBI:18420"/>
    </ligand>
</feature>
<feature type="binding site" evidence="1">
    <location>
        <begin position="62"/>
        <end position="66"/>
    </location>
    <ligand>
        <name>GTP</name>
        <dbReference type="ChEBI" id="CHEBI:37565"/>
    </ligand>
</feature>
<feature type="binding site" evidence="1">
    <location>
        <position position="64"/>
    </location>
    <ligand>
        <name>Mg(2+)</name>
        <dbReference type="ChEBI" id="CHEBI:18420"/>
    </ligand>
</feature>
<feature type="binding site" evidence="1">
    <location>
        <begin position="80"/>
        <end position="83"/>
    </location>
    <ligand>
        <name>GTP</name>
        <dbReference type="ChEBI" id="CHEBI:37565"/>
    </ligand>
</feature>
<feature type="binding site" evidence="1">
    <location>
        <begin position="147"/>
        <end position="150"/>
    </location>
    <ligand>
        <name>GTP</name>
        <dbReference type="ChEBI" id="CHEBI:37565"/>
    </ligand>
</feature>
<feature type="binding site" evidence="1">
    <location>
        <begin position="180"/>
        <end position="182"/>
    </location>
    <ligand>
        <name>GTP</name>
        <dbReference type="ChEBI" id="CHEBI:37565"/>
    </ligand>
</feature>
<protein>
    <recommendedName>
        <fullName evidence="1">Probable GTP-binding protein EngB</fullName>
    </recommendedName>
</protein>
<organism>
    <name type="scientific">Histophilus somni (strain 129Pt)</name>
    <name type="common">Haemophilus somnus</name>
    <dbReference type="NCBI Taxonomy" id="205914"/>
    <lineage>
        <taxon>Bacteria</taxon>
        <taxon>Pseudomonadati</taxon>
        <taxon>Pseudomonadota</taxon>
        <taxon>Gammaproteobacteria</taxon>
        <taxon>Pasteurellales</taxon>
        <taxon>Pasteurellaceae</taxon>
        <taxon>Histophilus</taxon>
    </lineage>
</organism>
<comment type="function">
    <text evidence="1">Necessary for normal cell division and for the maintenance of normal septation.</text>
</comment>
<comment type="cofactor">
    <cofactor evidence="1">
        <name>Mg(2+)</name>
        <dbReference type="ChEBI" id="CHEBI:18420"/>
    </cofactor>
</comment>
<comment type="similarity">
    <text evidence="1">Belongs to the TRAFAC class TrmE-Era-EngA-EngB-Septin-like GTPase superfamily. EngB GTPase family.</text>
</comment>
<comment type="sequence caution" evidence="2">
    <conflict type="erroneous initiation">
        <sequence resource="EMBL-CDS" id="ABI24610"/>
    </conflict>
</comment>
<accession>Q0I1G1</accession>